<feature type="chain" id="PRO_0000224617" description="Valine--tRNA ligase">
    <location>
        <begin position="1"/>
        <end position="856"/>
    </location>
</feature>
<feature type="short sequence motif" description="'HIGH' region">
    <location>
        <begin position="47"/>
        <end position="57"/>
    </location>
</feature>
<feature type="short sequence motif" description="'KMSKS' region">
    <location>
        <begin position="578"/>
        <end position="582"/>
    </location>
</feature>
<feature type="binding site" evidence="1">
    <location>
        <position position="581"/>
    </location>
    <ligand>
        <name>ATP</name>
        <dbReference type="ChEBI" id="CHEBI:30616"/>
    </ligand>
</feature>
<evidence type="ECO:0000255" key="1">
    <source>
        <dbReference type="HAMAP-Rule" id="MF_02005"/>
    </source>
</evidence>
<name>SYV_TROW8</name>
<reference key="1">
    <citation type="journal article" date="2003" name="Lancet">
        <title>Sequencing and analysis of the genome of the Whipple's disease bacterium Tropheryma whipplei.</title>
        <authorList>
            <person name="Bentley S.D."/>
            <person name="Maiwald M."/>
            <person name="Murphy L.D."/>
            <person name="Pallen M.J."/>
            <person name="Yeats C.A."/>
            <person name="Dover L.G."/>
            <person name="Norbertczak H.T."/>
            <person name="Besra G.S."/>
            <person name="Quail M.A."/>
            <person name="Harris D.E."/>
            <person name="von Herbay A."/>
            <person name="Goble A."/>
            <person name="Rutter S."/>
            <person name="Squares R."/>
            <person name="Squares S."/>
            <person name="Barrell B.G."/>
            <person name="Parkhill J."/>
            <person name="Relman D.A."/>
        </authorList>
    </citation>
    <scope>NUCLEOTIDE SEQUENCE [LARGE SCALE GENOMIC DNA]</scope>
    <source>
        <strain>TW08/27</strain>
    </source>
</reference>
<organism>
    <name type="scientific">Tropheryma whipplei (strain TW08/27)</name>
    <name type="common">Whipple's bacillus</name>
    <dbReference type="NCBI Taxonomy" id="218496"/>
    <lineage>
        <taxon>Bacteria</taxon>
        <taxon>Bacillati</taxon>
        <taxon>Actinomycetota</taxon>
        <taxon>Actinomycetes</taxon>
        <taxon>Micrococcales</taxon>
        <taxon>Tropherymataceae</taxon>
        <taxon>Tropheryma</taxon>
    </lineage>
</organism>
<proteinExistence type="inferred from homology"/>
<dbReference type="EC" id="6.1.1.9" evidence="1"/>
<dbReference type="EMBL" id="BX251410">
    <property type="protein sequence ID" value="CAD66960.1"/>
    <property type="molecule type" value="Genomic_DNA"/>
</dbReference>
<dbReference type="RefSeq" id="WP_011096240.1">
    <property type="nucleotide sequence ID" value="NC_004551.1"/>
</dbReference>
<dbReference type="SMR" id="Q83I17"/>
<dbReference type="GeneID" id="67388062"/>
<dbReference type="KEGG" id="tws:TW286"/>
<dbReference type="HOGENOM" id="CLU_001493_0_2_11"/>
<dbReference type="GO" id="GO:0005829">
    <property type="term" value="C:cytosol"/>
    <property type="evidence" value="ECO:0007669"/>
    <property type="project" value="TreeGrafter"/>
</dbReference>
<dbReference type="GO" id="GO:0002161">
    <property type="term" value="F:aminoacyl-tRNA deacylase activity"/>
    <property type="evidence" value="ECO:0007669"/>
    <property type="project" value="InterPro"/>
</dbReference>
<dbReference type="GO" id="GO:0005524">
    <property type="term" value="F:ATP binding"/>
    <property type="evidence" value="ECO:0007669"/>
    <property type="project" value="UniProtKB-UniRule"/>
</dbReference>
<dbReference type="GO" id="GO:0004832">
    <property type="term" value="F:valine-tRNA ligase activity"/>
    <property type="evidence" value="ECO:0007669"/>
    <property type="project" value="UniProtKB-UniRule"/>
</dbReference>
<dbReference type="GO" id="GO:0006438">
    <property type="term" value="P:valyl-tRNA aminoacylation"/>
    <property type="evidence" value="ECO:0007669"/>
    <property type="project" value="UniProtKB-UniRule"/>
</dbReference>
<dbReference type="CDD" id="cd07962">
    <property type="entry name" value="Anticodon_Ia_Val"/>
    <property type="match status" value="1"/>
</dbReference>
<dbReference type="CDD" id="cd00817">
    <property type="entry name" value="ValRS_core"/>
    <property type="match status" value="1"/>
</dbReference>
<dbReference type="Gene3D" id="3.40.50.620">
    <property type="entry name" value="HUPs"/>
    <property type="match status" value="2"/>
</dbReference>
<dbReference type="Gene3D" id="1.10.730.10">
    <property type="entry name" value="Isoleucyl-tRNA Synthetase, Domain 1"/>
    <property type="match status" value="1"/>
</dbReference>
<dbReference type="HAMAP" id="MF_02005">
    <property type="entry name" value="Val_tRNA_synth_type2"/>
    <property type="match status" value="1"/>
</dbReference>
<dbReference type="InterPro" id="IPR001412">
    <property type="entry name" value="aa-tRNA-synth_I_CS"/>
</dbReference>
<dbReference type="InterPro" id="IPR002300">
    <property type="entry name" value="aa-tRNA-synth_Ia"/>
</dbReference>
<dbReference type="InterPro" id="IPR033705">
    <property type="entry name" value="Anticodon_Ia_Val"/>
</dbReference>
<dbReference type="InterPro" id="IPR013155">
    <property type="entry name" value="M/V/L/I-tRNA-synth_anticd-bd"/>
</dbReference>
<dbReference type="InterPro" id="IPR014729">
    <property type="entry name" value="Rossmann-like_a/b/a_fold"/>
</dbReference>
<dbReference type="InterPro" id="IPR009080">
    <property type="entry name" value="tRNAsynth_Ia_anticodon-bd"/>
</dbReference>
<dbReference type="InterPro" id="IPR009008">
    <property type="entry name" value="Val/Leu/Ile-tRNA-synth_edit"/>
</dbReference>
<dbReference type="InterPro" id="IPR022874">
    <property type="entry name" value="Valine-tRNA_ligase_type_2"/>
</dbReference>
<dbReference type="InterPro" id="IPR002303">
    <property type="entry name" value="Valyl-tRNA_ligase"/>
</dbReference>
<dbReference type="InterPro" id="IPR048044">
    <property type="entry name" value="Valyl-tRNA_ligase_actino"/>
</dbReference>
<dbReference type="NCBIfam" id="NF000540">
    <property type="entry name" value="alt_ValS"/>
    <property type="match status" value="1"/>
</dbReference>
<dbReference type="NCBIfam" id="NF009687">
    <property type="entry name" value="PRK13208.1"/>
    <property type="match status" value="1"/>
</dbReference>
<dbReference type="PANTHER" id="PTHR11946:SF93">
    <property type="entry name" value="VALINE--TRNA LIGASE, CHLOROPLASTIC_MITOCHONDRIAL 2"/>
    <property type="match status" value="1"/>
</dbReference>
<dbReference type="PANTHER" id="PTHR11946">
    <property type="entry name" value="VALYL-TRNA SYNTHETASES"/>
    <property type="match status" value="1"/>
</dbReference>
<dbReference type="Pfam" id="PF08264">
    <property type="entry name" value="Anticodon_1"/>
    <property type="match status" value="1"/>
</dbReference>
<dbReference type="Pfam" id="PF00133">
    <property type="entry name" value="tRNA-synt_1"/>
    <property type="match status" value="1"/>
</dbReference>
<dbReference type="PRINTS" id="PR00986">
    <property type="entry name" value="TRNASYNTHVAL"/>
</dbReference>
<dbReference type="SUPFAM" id="SSF47323">
    <property type="entry name" value="Anticodon-binding domain of a subclass of class I aminoacyl-tRNA synthetases"/>
    <property type="match status" value="1"/>
</dbReference>
<dbReference type="SUPFAM" id="SSF52374">
    <property type="entry name" value="Nucleotidylyl transferase"/>
    <property type="match status" value="1"/>
</dbReference>
<dbReference type="SUPFAM" id="SSF50677">
    <property type="entry name" value="ValRS/IleRS/LeuRS editing domain"/>
    <property type="match status" value="1"/>
</dbReference>
<dbReference type="PROSITE" id="PS00178">
    <property type="entry name" value="AA_TRNA_LIGASE_I"/>
    <property type="match status" value="1"/>
</dbReference>
<accession>Q83I17</accession>
<gene>
    <name evidence="1" type="primary">valS</name>
    <name type="ordered locus">TW286</name>
</gene>
<comment type="function">
    <text evidence="1">Catalyzes the attachment of valine to tRNA(Val). As ValRS can inadvertently accommodate and process structurally similar amino acids such as threonine, to avoid such errors, it has a 'posttransfer' editing activity that hydrolyzes mischarged Thr-tRNA(Val) in a tRNA-dependent manner.</text>
</comment>
<comment type="catalytic activity">
    <reaction evidence="1">
        <text>tRNA(Val) + L-valine + ATP = L-valyl-tRNA(Val) + AMP + diphosphate</text>
        <dbReference type="Rhea" id="RHEA:10704"/>
        <dbReference type="Rhea" id="RHEA-COMP:9672"/>
        <dbReference type="Rhea" id="RHEA-COMP:9708"/>
        <dbReference type="ChEBI" id="CHEBI:30616"/>
        <dbReference type="ChEBI" id="CHEBI:33019"/>
        <dbReference type="ChEBI" id="CHEBI:57762"/>
        <dbReference type="ChEBI" id="CHEBI:78442"/>
        <dbReference type="ChEBI" id="CHEBI:78537"/>
        <dbReference type="ChEBI" id="CHEBI:456215"/>
        <dbReference type="EC" id="6.1.1.9"/>
    </reaction>
</comment>
<comment type="subunit">
    <text evidence="1">Monomer.</text>
</comment>
<comment type="subcellular location">
    <subcellularLocation>
        <location evidence="1">Cytoplasm</location>
    </subcellularLocation>
</comment>
<comment type="domain">
    <text evidence="1">ValRS has two distinct active sites: one for aminoacylation and one for editing. The misactivated threonine is translocated from the active site to the editing site.</text>
</comment>
<comment type="similarity">
    <text evidence="1">Belongs to the class-I aminoacyl-tRNA synthetase family. ValS type 2 subfamily.</text>
</comment>
<protein>
    <recommendedName>
        <fullName evidence="1">Valine--tRNA ligase</fullName>
        <ecNumber evidence="1">6.1.1.9</ecNumber>
    </recommendedName>
    <alternativeName>
        <fullName evidence="1">Valyl-tRNA synthetase</fullName>
        <shortName evidence="1">ValRS</shortName>
    </alternativeName>
</protein>
<sequence length="856" mass="97596">MNIPDKPSLEGLEEKWSKLWKSSKIYNFELEQVSAKQDVYSIDTPPPTASGVLHIGHVFSYTHTDIIARFQRMQGKIVFYPMGWDDNGLPTERRVQNYFSVRCDPSLPYCQNLKLAQINNDSMARSISRRNFIELCQQLSEEDERKFEELWNYLGLSVDWSQTYRTIDDDAIHLSQHFFLENVNSGAAYQDWAPTLWDVTYRTAVAQAEIEERQITGFYYRLAFENENATVEIETTRPELLAGCVALVAHPDDNRYKHLFGSHVITPVFDVKVPVLPHRAAQPDKGSGIAMVCTFGDITDVQWWRDLNLQSCPIIDASGRVVPDAPDPIVSERGRRAFATLSGKTLSAAKKHTLEMLISEKSIIGEPRKITHPVKFFEKGDKPLEILLTRQWYIRNGYSDNALTERLIELGKQLQWYPKTMLRRYEDWLTGLNSDWLISRQRFLGVPFPIWYQTDDRGNAKFDDPIFPDRKDLPLDPTIAVPRGYSENQRGAPNGFVAETDVMDTWATSSLTPQLAGKYLKNPKLFEAIFPYSLRPQGQDIIRTWLFSSIIRSEYAHATAPWKSTAISGFILDPDRKKMSKSKGNAKTPKDILDRYGADAVRYWAACARLGVDTALDVENPTQIKIGRRLALKVLNAARFVVHLHKNKETYSGQPDMKRCYPIDFAAISNPLDLSLLKQLDQTIEQSTNALKNFDHSKALDTTETFFWNFCDNYVEIVKDRAYAGDESALTTLLVVTNIVIKLLAPFIPYATEEAWSWFNETSVHTQSWPETLKLHSGDIELLKIACSFMSLVRGGKTEAKLSQKTEIAYLKIALPNPEIIMPIMDDLRRAGKIDKCELIDGDAQILAIEYGEISR</sequence>
<keyword id="KW-0030">Aminoacyl-tRNA synthetase</keyword>
<keyword id="KW-0067">ATP-binding</keyword>
<keyword id="KW-0963">Cytoplasm</keyword>
<keyword id="KW-0436">Ligase</keyword>
<keyword id="KW-0547">Nucleotide-binding</keyword>
<keyword id="KW-0648">Protein biosynthesis</keyword>